<feature type="chain" id="PRO_1000165782" description="DNA-directed RNA polymerase subunit beta">
    <location>
        <begin position="1"/>
        <end position="1380"/>
    </location>
</feature>
<dbReference type="EC" id="2.7.7.6" evidence="1"/>
<dbReference type="EMBL" id="CP000628">
    <property type="protein sequence ID" value="ACM26272.1"/>
    <property type="molecule type" value="Genomic_DNA"/>
</dbReference>
<dbReference type="RefSeq" id="WP_007702194.1">
    <property type="nucleotide sequence ID" value="NC_011985.1"/>
</dbReference>
<dbReference type="SMR" id="B9JDS1"/>
<dbReference type="STRING" id="311403.Arad_1962"/>
<dbReference type="KEGG" id="ara:Arad_1962"/>
<dbReference type="eggNOG" id="COG0085">
    <property type="taxonomic scope" value="Bacteria"/>
</dbReference>
<dbReference type="HOGENOM" id="CLU_000524_4_0_5"/>
<dbReference type="Proteomes" id="UP000001600">
    <property type="component" value="Chromosome 1"/>
</dbReference>
<dbReference type="GO" id="GO:0000428">
    <property type="term" value="C:DNA-directed RNA polymerase complex"/>
    <property type="evidence" value="ECO:0007669"/>
    <property type="project" value="UniProtKB-KW"/>
</dbReference>
<dbReference type="GO" id="GO:0003677">
    <property type="term" value="F:DNA binding"/>
    <property type="evidence" value="ECO:0007669"/>
    <property type="project" value="UniProtKB-UniRule"/>
</dbReference>
<dbReference type="GO" id="GO:0003899">
    <property type="term" value="F:DNA-directed RNA polymerase activity"/>
    <property type="evidence" value="ECO:0007669"/>
    <property type="project" value="UniProtKB-UniRule"/>
</dbReference>
<dbReference type="GO" id="GO:0032549">
    <property type="term" value="F:ribonucleoside binding"/>
    <property type="evidence" value="ECO:0007669"/>
    <property type="project" value="InterPro"/>
</dbReference>
<dbReference type="GO" id="GO:0006351">
    <property type="term" value="P:DNA-templated transcription"/>
    <property type="evidence" value="ECO:0007669"/>
    <property type="project" value="UniProtKB-UniRule"/>
</dbReference>
<dbReference type="CDD" id="cd00653">
    <property type="entry name" value="RNA_pol_B_RPB2"/>
    <property type="match status" value="1"/>
</dbReference>
<dbReference type="FunFam" id="2.40.50.100:FF:000006">
    <property type="entry name" value="DNA-directed RNA polymerase subunit beta"/>
    <property type="match status" value="1"/>
</dbReference>
<dbReference type="FunFam" id="3.90.1800.10:FF:000001">
    <property type="entry name" value="DNA-directed RNA polymerase subunit beta"/>
    <property type="match status" value="1"/>
</dbReference>
<dbReference type="Gene3D" id="2.40.50.100">
    <property type="match status" value="1"/>
</dbReference>
<dbReference type="Gene3D" id="2.40.50.150">
    <property type="match status" value="1"/>
</dbReference>
<dbReference type="Gene3D" id="3.90.1100.10">
    <property type="match status" value="2"/>
</dbReference>
<dbReference type="Gene3D" id="2.30.150.10">
    <property type="entry name" value="DNA-directed RNA polymerase, beta subunit, external 1 domain"/>
    <property type="match status" value="1"/>
</dbReference>
<dbReference type="Gene3D" id="2.40.270.10">
    <property type="entry name" value="DNA-directed RNA polymerase, subunit 2, domain 6"/>
    <property type="match status" value="1"/>
</dbReference>
<dbReference type="Gene3D" id="3.90.1800.10">
    <property type="entry name" value="RNA polymerase alpha subunit dimerisation domain"/>
    <property type="match status" value="1"/>
</dbReference>
<dbReference type="Gene3D" id="3.90.1110.10">
    <property type="entry name" value="RNA polymerase Rpb2, domain 2"/>
    <property type="match status" value="1"/>
</dbReference>
<dbReference type="HAMAP" id="MF_01321">
    <property type="entry name" value="RNApol_bact_RpoB"/>
    <property type="match status" value="1"/>
</dbReference>
<dbReference type="InterPro" id="IPR042107">
    <property type="entry name" value="DNA-dir_RNA_pol_bsu_ext_1_sf"/>
</dbReference>
<dbReference type="InterPro" id="IPR019462">
    <property type="entry name" value="DNA-dir_RNA_pol_bsu_external_1"/>
</dbReference>
<dbReference type="InterPro" id="IPR015712">
    <property type="entry name" value="DNA-dir_RNA_pol_su2"/>
</dbReference>
<dbReference type="InterPro" id="IPR007120">
    <property type="entry name" value="DNA-dir_RNAP_su2_dom"/>
</dbReference>
<dbReference type="InterPro" id="IPR037033">
    <property type="entry name" value="DNA-dir_RNAP_su2_hyb_sf"/>
</dbReference>
<dbReference type="InterPro" id="IPR010243">
    <property type="entry name" value="RNA_pol_bsu_bac"/>
</dbReference>
<dbReference type="InterPro" id="IPR007121">
    <property type="entry name" value="RNA_pol_bsu_CS"/>
</dbReference>
<dbReference type="InterPro" id="IPR007644">
    <property type="entry name" value="RNA_pol_bsu_protrusion"/>
</dbReference>
<dbReference type="InterPro" id="IPR007642">
    <property type="entry name" value="RNA_pol_Rpb2_2"/>
</dbReference>
<dbReference type="InterPro" id="IPR037034">
    <property type="entry name" value="RNA_pol_Rpb2_2_sf"/>
</dbReference>
<dbReference type="InterPro" id="IPR007645">
    <property type="entry name" value="RNA_pol_Rpb2_3"/>
</dbReference>
<dbReference type="InterPro" id="IPR007641">
    <property type="entry name" value="RNA_pol_Rpb2_7"/>
</dbReference>
<dbReference type="InterPro" id="IPR014724">
    <property type="entry name" value="RNA_pol_RPB2_OB-fold"/>
</dbReference>
<dbReference type="NCBIfam" id="NF001616">
    <property type="entry name" value="PRK00405.1"/>
    <property type="match status" value="1"/>
</dbReference>
<dbReference type="NCBIfam" id="TIGR02013">
    <property type="entry name" value="rpoB"/>
    <property type="match status" value="1"/>
</dbReference>
<dbReference type="PANTHER" id="PTHR20856">
    <property type="entry name" value="DNA-DIRECTED RNA POLYMERASE I SUBUNIT 2"/>
    <property type="match status" value="1"/>
</dbReference>
<dbReference type="Pfam" id="PF04563">
    <property type="entry name" value="RNA_pol_Rpb2_1"/>
    <property type="match status" value="1"/>
</dbReference>
<dbReference type="Pfam" id="PF04561">
    <property type="entry name" value="RNA_pol_Rpb2_2"/>
    <property type="match status" value="2"/>
</dbReference>
<dbReference type="Pfam" id="PF04565">
    <property type="entry name" value="RNA_pol_Rpb2_3"/>
    <property type="match status" value="1"/>
</dbReference>
<dbReference type="Pfam" id="PF10385">
    <property type="entry name" value="RNA_pol_Rpb2_45"/>
    <property type="match status" value="1"/>
</dbReference>
<dbReference type="Pfam" id="PF00562">
    <property type="entry name" value="RNA_pol_Rpb2_6"/>
    <property type="match status" value="1"/>
</dbReference>
<dbReference type="Pfam" id="PF04560">
    <property type="entry name" value="RNA_pol_Rpb2_7"/>
    <property type="match status" value="1"/>
</dbReference>
<dbReference type="SUPFAM" id="SSF64484">
    <property type="entry name" value="beta and beta-prime subunits of DNA dependent RNA-polymerase"/>
    <property type="match status" value="1"/>
</dbReference>
<dbReference type="PROSITE" id="PS01166">
    <property type="entry name" value="RNA_POL_BETA"/>
    <property type="match status" value="1"/>
</dbReference>
<gene>
    <name evidence="1" type="primary">rpoB</name>
    <name type="ordered locus">Arad_1962</name>
</gene>
<organism>
    <name type="scientific">Rhizobium rhizogenes (strain K84 / ATCC BAA-868)</name>
    <name type="common">Agrobacterium radiobacter</name>
    <dbReference type="NCBI Taxonomy" id="311403"/>
    <lineage>
        <taxon>Bacteria</taxon>
        <taxon>Pseudomonadati</taxon>
        <taxon>Pseudomonadota</taxon>
        <taxon>Alphaproteobacteria</taxon>
        <taxon>Hyphomicrobiales</taxon>
        <taxon>Rhizobiaceae</taxon>
        <taxon>Rhizobium/Agrobacterium group</taxon>
        <taxon>Rhizobium</taxon>
    </lineage>
</organism>
<evidence type="ECO:0000255" key="1">
    <source>
        <dbReference type="HAMAP-Rule" id="MF_01321"/>
    </source>
</evidence>
<comment type="function">
    <text evidence="1">DNA-dependent RNA polymerase catalyzes the transcription of DNA into RNA using the four ribonucleoside triphosphates as substrates.</text>
</comment>
<comment type="catalytic activity">
    <reaction evidence="1">
        <text>RNA(n) + a ribonucleoside 5'-triphosphate = RNA(n+1) + diphosphate</text>
        <dbReference type="Rhea" id="RHEA:21248"/>
        <dbReference type="Rhea" id="RHEA-COMP:14527"/>
        <dbReference type="Rhea" id="RHEA-COMP:17342"/>
        <dbReference type="ChEBI" id="CHEBI:33019"/>
        <dbReference type="ChEBI" id="CHEBI:61557"/>
        <dbReference type="ChEBI" id="CHEBI:140395"/>
        <dbReference type="EC" id="2.7.7.6"/>
    </reaction>
</comment>
<comment type="subunit">
    <text evidence="1">The RNAP catalytic core consists of 2 alpha, 1 beta, 1 beta' and 1 omega subunit. When a sigma factor is associated with the core the holoenzyme is formed, which can initiate transcription.</text>
</comment>
<comment type="similarity">
    <text evidence="1">Belongs to the RNA polymerase beta chain family.</text>
</comment>
<name>RPOB_RHIR8</name>
<accession>B9JDS1</accession>
<reference key="1">
    <citation type="journal article" date="2009" name="J. Bacteriol.">
        <title>Genome sequences of three Agrobacterium biovars help elucidate the evolution of multichromosome genomes in bacteria.</title>
        <authorList>
            <person name="Slater S.C."/>
            <person name="Goldman B.S."/>
            <person name="Goodner B."/>
            <person name="Setubal J.C."/>
            <person name="Farrand S.K."/>
            <person name="Nester E.W."/>
            <person name="Burr T.J."/>
            <person name="Banta L."/>
            <person name="Dickerman A.W."/>
            <person name="Paulsen I."/>
            <person name="Otten L."/>
            <person name="Suen G."/>
            <person name="Welch R."/>
            <person name="Almeida N.F."/>
            <person name="Arnold F."/>
            <person name="Burton O.T."/>
            <person name="Du Z."/>
            <person name="Ewing A."/>
            <person name="Godsy E."/>
            <person name="Heisel S."/>
            <person name="Houmiel K.L."/>
            <person name="Jhaveri J."/>
            <person name="Lu J."/>
            <person name="Miller N.M."/>
            <person name="Norton S."/>
            <person name="Chen Q."/>
            <person name="Phoolcharoen W."/>
            <person name="Ohlin V."/>
            <person name="Ondrusek D."/>
            <person name="Pride N."/>
            <person name="Stricklin S.L."/>
            <person name="Sun J."/>
            <person name="Wheeler C."/>
            <person name="Wilson L."/>
            <person name="Zhu H."/>
            <person name="Wood D.W."/>
        </authorList>
    </citation>
    <scope>NUCLEOTIDE SEQUENCE [LARGE SCALE GENOMIC DNA]</scope>
    <source>
        <strain>K84 / ATCC BAA-868</strain>
    </source>
</reference>
<protein>
    <recommendedName>
        <fullName evidence="1">DNA-directed RNA polymerase subunit beta</fullName>
        <shortName evidence="1">RNAP subunit beta</shortName>
        <ecNumber evidence="1">2.7.7.6</ecNumber>
    </recommendedName>
    <alternativeName>
        <fullName evidence="1">RNA polymerase subunit beta</fullName>
    </alternativeName>
    <alternativeName>
        <fullName evidence="1">Transcriptase subunit beta</fullName>
    </alternativeName>
</protein>
<keyword id="KW-0240">DNA-directed RNA polymerase</keyword>
<keyword id="KW-0548">Nucleotidyltransferase</keyword>
<keyword id="KW-0804">Transcription</keyword>
<keyword id="KW-0808">Transferase</keyword>
<sequence length="1380" mass="153605">MAQTLSFNGRRRVRKFFGKIPEVAEMPNLIEVQKASYDQFLMVEEPKGGRPDEGLQSVFKSVFPITDFSGASMLEFVSYEFEPPKFDVDECRQRDLTYAAPLKVTLRLIVFDIDEDTGAKSIKDIKEQSVYMGDMPLMTNNGTFIVNGTERVIVSQMHRSPGVFFDHDKGKSHSSGKLLFAARVIPYRGSWLDIEFDAKDIVYARIDRRRKIPVTSLLMALGMDGEEILSTFYTKSLYERSGDGWRIPFNAETLKGAKTVTDMIDADTGEVVVEGGKKLTPRLLRQLQDKGLKALKATDEDLYGLFLAEDIVNFQTGEIYLEAGDEIDEKTLPVILKAGFDEIPVLGIDHINVGAYIRNTLSADKNENRQDALFDIYRVMRPGEPPTMDSAEAMFNSLFFDAERYDLSAVGRVKMNMRLDLEVADTVRVLRKDDILAVVKMLVELRDGKGEIDDIDNLGNRRVRSVGELMENQYRLGLLRMERAIKERMSSIEIDTVMPQDLINAKPAAAAVREFFGSSQLSQFMDQVNPLSEITHKRRLSALGPGGLTRERAGFEVRDVHPTHYGRICPIETPEGPNIGLINSLATFARVNKYGFIESPYRRIIDGKVTTDVLYLSAMEEAKYYVAQANAELDAEGSFIEEFVVCRHAGEVMLAPRDNINLMDVSPKQLVSVAAALIPFLENDDANRALMGSNMQRQAVPLLRAEAPFVGTGMEPVVARDSGAAIGARRGGVVDQVDATRIVIRATEDLDPSKSGVDIYRLMKFQRSNQNTCVNQRPLVTVGDFVNKGDILADGPSTDLGDLALGRNVLVAFMPWNGYNYEDSILLSERIVADDVFTSIHIEEFEVMARDTKLGPEEITRDIPNVSEEALKNLDEAGIVYIGAEVQPGDILVGKITPKGESPMTPEEKLLRAIFGEKASDVRDTSMRMPPGTYGTVVEVRVFNRHGVEKDERAMAIEREEIERLAKDRDDEQAILDRNVYGRLIEMLRGQVALAGPKNFKKGTELSNAVVSEYPRSQWWMFAVEDEKVQGELEALRGQYDESKSHLEQRFMDKVEKVQRGDEMPPGVMKMVKVFVAVKRKIQPGDKMAGRHGNKGVVSRIVPVEDMPFLEDGTHVDIVLNPLGVPSRMNVGQILETHLGWACAGMGRQIGELIEAYKANGNIEPLRKTIDMVVGDGPKSDDVHNYDDASVLRLADQWKRGVSIATPVFDGAGEADVNEMLAMAGLKETGQSTLYDGRTGEQFDRQVTVGYIYMLKLNHLVDDKIHARSIGPYSLVTQQPLGGKAQFGGQRFGEMEVWALEAYGAAYTLQEMLTVKSDDVAGRTKVYEAIVRGDDTFEAGIPESFNVLVKEMRSLGLSVELENSKVDDLQAAGQLPDAAE</sequence>
<proteinExistence type="inferred from homology"/>